<sequence>MNIDSNIIKNENLINANNHTDRRDVHDSLAEAPEKITELKKNHWEELLPSSSNWYCTSVADCNENQIYIYACKSNVSIFNIKSKKFIGELNGHTDRVTSVGFFKRFESKNDESYKWCITGSDDKTVRIWKFNSNDDDHNEDTEIGDDFKHGSGGGGSDGGGGDDVNNFYGNKSSNFCIYYHQEHKAGVTCVVASPLVPDLVLSGDKAGALVIYRTLTNHVFPIPPIIGNNISISTLAFSPNHSDLVAIGYLNGIVLIYNFVIRSTVCKISAHSADVLSIVWFDSTIIQKNNIFHDNNINDQDDNNSNHRNRIFLATCSKDKAIKIWKQVGEKIESGFTNIYQFNPSKYSIQHSSSSGGGGINQNDKQRVWLTLSWSPESPQYLLSNSLTADVLIWDLINFKSPPEKFQSSHQRLIFNITQIPNSDGSLAKTTATTETTTKNKIKNKDKKQSQIKLNNKVITVSLDRQIIIWENLKAKIKIQGLGGFVYSIDTCSYSPNTFAIGCGDNTIRLWSPTENSKDAYESKTLWKGIQSKVTSLSICKDYGFSNSNLIAFGMDDGRVGVYNINTNQSKIFPGGHKNEIYEIIWKPPPTPTPQKNINNNNNNNNNNNNNNNNNNNNNNNNNNNNNNNNNNNNINNNNNNNSNNEQQPNKLYSIGNNEIYEWDYNDFNKSFTNMTPIIQQLNPKETFSKHKTDINFNLNGDMISIGYSDGTIDIFTSEFLFLTRIREHKKLINRVQWNHFKENEMILASASTDKKVIIYKLSKIGNQNENEKKIDNEKGKENENEKGKENENENENENENENENENENEIENIVNNNNENDTEIEIKNINKNENVDKEEMVENNNNNNIKYKIEILHQFIGHKNNVCSVSWSNVDPNLLGSASADGTVQVWNIKSKEAISNMRGHDGRVFTVCWSLLDPNLLVSGGEDQTVRLWNYSTQPFKTVTESQIKKSPQPELSISLNKKITEQQQQQQQPQSPIKSNPDQSNNPSLVPPILLTSVTSTSNTTATATTITQITESLPKKRPIFLLNKDIVQRQDSSQYVVPLAKYFTTNDQDSINTNETKQEYEFGSNSENNNSKIEAIFSEKKEIINKLVQKESLELLKIDDVENYISLNSWNPANLKQALYQVIKNGKLTGNIVSLSIQAGREIFESICNLYSQQLICIGDYHLAVSYLLMIGKVNEAIEVYRNTLLFQEAIILAKSRFLPDDPIINKLFTEWAKQTETSHPIHSIKCYLATINDQSLNSKQELLKLLSSVQTKQIIKIQSDLEQILK</sequence>
<comment type="function">
    <text evidence="1">The SMN complex catalyzes the assembly of small nuclear ribonucleoproteins (snRNPs), the building blocks of the spliceosome, and thereby plays an important role in the splicing of cellular pre-mRNAs. Most spliceosomal snRNPs contain a common set of Sm proteins SNRPB, SNRPD1, SNRPD2, SNRPD3, SNRPE, SNRPF and SNRPG that assemble in a heptameric protein ring on the Sm site of the small nuclear RNA to form the core snRNP (Sm core). In the cytosol, the Sm proteins SNRPD1, SNRPD2, SNRPE, SNRPF and SNRPG are trapped in an inactive 6S pICln-Sm complex by the chaperone CLNS1A that controls the assembly of the core snRNP. To assemble core snRNPs, the SMN complex accepts the trapped 5Sm proteins from CLNS1A forming an intermediate. Binding of snRNA inside 5Sm ultimately triggers eviction of the SMN complex, thereby allowing binding of SNRPD3 and SNRPB to complete assembly of the core snRNP. Within the SMN complex, GEMIN5 recognizes and delivers the small nuclear RNAs (snRNAs) to the SMN complex. Binds to the 7-methylguanosine cap of RNA molecules (By similarity).</text>
</comment>
<comment type="subunit">
    <text evidence="1">Part of the core SMN complex.</text>
</comment>
<comment type="subcellular location">
    <subcellularLocation>
        <location evidence="1">Nucleus</location>
        <location evidence="1">Nucleoplasm</location>
    </subcellularLocation>
    <subcellularLocation>
        <location evidence="1">Nucleus</location>
        <location evidence="1">Gem</location>
    </subcellularLocation>
    <subcellularLocation>
        <location evidence="1">Cytoplasm</location>
    </subcellularLocation>
    <text evidence="1">Found both in the nucleoplasm and in nuclear bodies called gems (Gemini of Cajal bodies) that are often in proximity to Cajal (coiled) bodies. Also found in the cytoplasm.</text>
</comment>
<comment type="domain">
    <text evidence="1">The WD repeat domain mediates binding to U1 snRNA and to U4 snRNA. The WD repeat domain also mediates binding to the 7-methylguanosine cap that is found both on mRNA and snRNA molecules. The regions that bind snRNA molecules and the isolated 7-methylguanosine cap overlap at least partially. Besides, the WD repeat domain mediates interaction with the 60S large ribosomal subunit.</text>
</comment>
<comment type="similarity">
    <text evidence="4">Belongs to the WD repeat gemin-5 family.</text>
</comment>
<proteinExistence type="inferred from homology"/>
<evidence type="ECO:0000250" key="1">
    <source>
        <dbReference type="UniProtKB" id="Q8TEQ6"/>
    </source>
</evidence>
<evidence type="ECO:0000255" key="2"/>
<evidence type="ECO:0000256" key="3">
    <source>
        <dbReference type="SAM" id="MobiDB-lite"/>
    </source>
</evidence>
<evidence type="ECO:0000305" key="4"/>
<accession>Q54IY5</accession>
<keyword id="KW-0175">Coiled coil</keyword>
<keyword id="KW-0963">Cytoplasm</keyword>
<keyword id="KW-0539">Nucleus</keyword>
<keyword id="KW-1185">Reference proteome</keyword>
<keyword id="KW-0677">Repeat</keyword>
<keyword id="KW-0694">RNA-binding</keyword>
<keyword id="KW-0853">WD repeat</keyword>
<reference key="1">
    <citation type="journal article" date="2005" name="Nature">
        <title>The genome of the social amoeba Dictyostelium discoideum.</title>
        <authorList>
            <person name="Eichinger L."/>
            <person name="Pachebat J.A."/>
            <person name="Gloeckner G."/>
            <person name="Rajandream M.A."/>
            <person name="Sucgang R."/>
            <person name="Berriman M."/>
            <person name="Song J."/>
            <person name="Olsen R."/>
            <person name="Szafranski K."/>
            <person name="Xu Q."/>
            <person name="Tunggal B."/>
            <person name="Kummerfeld S."/>
            <person name="Madera M."/>
            <person name="Konfortov B.A."/>
            <person name="Rivero F."/>
            <person name="Bankier A.T."/>
            <person name="Lehmann R."/>
            <person name="Hamlin N."/>
            <person name="Davies R."/>
            <person name="Gaudet P."/>
            <person name="Fey P."/>
            <person name="Pilcher K."/>
            <person name="Chen G."/>
            <person name="Saunders D."/>
            <person name="Sodergren E.J."/>
            <person name="Davis P."/>
            <person name="Kerhornou A."/>
            <person name="Nie X."/>
            <person name="Hall N."/>
            <person name="Anjard C."/>
            <person name="Hemphill L."/>
            <person name="Bason N."/>
            <person name="Farbrother P."/>
            <person name="Desany B."/>
            <person name="Just E."/>
            <person name="Morio T."/>
            <person name="Rost R."/>
            <person name="Churcher C.M."/>
            <person name="Cooper J."/>
            <person name="Haydock S."/>
            <person name="van Driessche N."/>
            <person name="Cronin A."/>
            <person name="Goodhead I."/>
            <person name="Muzny D.M."/>
            <person name="Mourier T."/>
            <person name="Pain A."/>
            <person name="Lu M."/>
            <person name="Harper D."/>
            <person name="Lindsay R."/>
            <person name="Hauser H."/>
            <person name="James K.D."/>
            <person name="Quiles M."/>
            <person name="Madan Babu M."/>
            <person name="Saito T."/>
            <person name="Buchrieser C."/>
            <person name="Wardroper A."/>
            <person name="Felder M."/>
            <person name="Thangavelu M."/>
            <person name="Johnson D."/>
            <person name="Knights A."/>
            <person name="Loulseged H."/>
            <person name="Mungall K.L."/>
            <person name="Oliver K."/>
            <person name="Price C."/>
            <person name="Quail M.A."/>
            <person name="Urushihara H."/>
            <person name="Hernandez J."/>
            <person name="Rabbinowitsch E."/>
            <person name="Steffen D."/>
            <person name="Sanders M."/>
            <person name="Ma J."/>
            <person name="Kohara Y."/>
            <person name="Sharp S."/>
            <person name="Simmonds M.N."/>
            <person name="Spiegler S."/>
            <person name="Tivey A."/>
            <person name="Sugano S."/>
            <person name="White B."/>
            <person name="Walker D."/>
            <person name="Woodward J.R."/>
            <person name="Winckler T."/>
            <person name="Tanaka Y."/>
            <person name="Shaulsky G."/>
            <person name="Schleicher M."/>
            <person name="Weinstock G.M."/>
            <person name="Rosenthal A."/>
            <person name="Cox E.C."/>
            <person name="Chisholm R.L."/>
            <person name="Gibbs R.A."/>
            <person name="Loomis W.F."/>
            <person name="Platzer M."/>
            <person name="Kay R.R."/>
            <person name="Williams J.G."/>
            <person name="Dear P.H."/>
            <person name="Noegel A.A."/>
            <person name="Barrell B.G."/>
            <person name="Kuspa A."/>
        </authorList>
    </citation>
    <scope>NUCLEOTIDE SEQUENCE [LARGE SCALE GENOMIC DNA]</scope>
    <source>
        <strain>AX4</strain>
    </source>
</reference>
<feature type="chain" id="PRO_0000371342" description="Component of gems protein 5">
    <location>
        <begin position="1"/>
        <end position="1276"/>
    </location>
</feature>
<feature type="repeat" description="WD 1">
    <location>
        <begin position="92"/>
        <end position="139"/>
    </location>
</feature>
<feature type="repeat" description="WD 2">
    <location>
        <begin position="183"/>
        <end position="223"/>
    </location>
</feature>
<feature type="repeat" description="WD 3">
    <location>
        <begin position="228"/>
        <end position="268"/>
    </location>
</feature>
<feature type="repeat" description="WD 4">
    <location>
        <begin position="271"/>
        <end position="336"/>
    </location>
</feature>
<feature type="repeat" description="WD 5">
    <location>
        <begin position="364"/>
        <end position="405"/>
    </location>
</feature>
<feature type="repeat" description="WD 6">
    <location>
        <begin position="438"/>
        <end position="481"/>
    </location>
</feature>
<feature type="repeat" description="WD 7">
    <location>
        <begin position="485"/>
        <end position="522"/>
    </location>
</feature>
<feature type="repeat" description="WD 8">
    <location>
        <begin position="530"/>
        <end position="574"/>
    </location>
</feature>
<feature type="repeat" description="WD 9">
    <location>
        <begin position="688"/>
        <end position="727"/>
    </location>
</feature>
<feature type="repeat" description="WD 10">
    <location>
        <begin position="729"/>
        <end position="771"/>
    </location>
</feature>
<feature type="repeat" description="WD 11">
    <location>
        <begin position="863"/>
        <end position="903"/>
    </location>
</feature>
<feature type="repeat" description="WD 12">
    <location>
        <begin position="906"/>
        <end position="946"/>
    </location>
</feature>
<feature type="region of interest" description="Interaction with U4 snRNA" evidence="1">
    <location>
        <begin position="53"/>
        <end position="55"/>
    </location>
</feature>
<feature type="region of interest" description="Disordered" evidence="3">
    <location>
        <begin position="138"/>
        <end position="157"/>
    </location>
</feature>
<feature type="region of interest" description="Disordered" evidence="3">
    <location>
        <begin position="586"/>
        <end position="652"/>
    </location>
</feature>
<feature type="region of interest" description="Disordered" evidence="3">
    <location>
        <begin position="772"/>
        <end position="809"/>
    </location>
</feature>
<feature type="region of interest" description="Disordered" evidence="3">
    <location>
        <begin position="967"/>
        <end position="997"/>
    </location>
</feature>
<feature type="coiled-coil region" evidence="2">
    <location>
        <begin position="778"/>
        <end position="829"/>
    </location>
</feature>
<feature type="compositionally biased region" description="Low complexity" evidence="3">
    <location>
        <begin position="598"/>
        <end position="646"/>
    </location>
</feature>
<feature type="compositionally biased region" description="Basic and acidic residues" evidence="3">
    <location>
        <begin position="772"/>
        <end position="793"/>
    </location>
</feature>
<feature type="compositionally biased region" description="Acidic residues" evidence="3">
    <location>
        <begin position="794"/>
        <end position="809"/>
    </location>
</feature>
<feature type="compositionally biased region" description="Polar residues" evidence="3">
    <location>
        <begin position="979"/>
        <end position="992"/>
    </location>
</feature>
<feature type="site" description="Interaction with U4 snRNA" evidence="1">
    <location>
        <position position="368"/>
    </location>
</feature>
<feature type="site" description="Interaction with U4 snRNA" evidence="1">
    <location>
        <position position="413"/>
    </location>
</feature>
<feature type="site" description="Interaction with U4 snRNA" evidence="1">
    <location>
        <position position="466"/>
    </location>
</feature>
<feature type="site" description="Interaction with U4 snRNA" evidence="1">
    <location>
        <position position="486"/>
    </location>
</feature>
<feature type="site" description="Interaction with U4 snRNA" evidence="1">
    <location>
        <position position="528"/>
    </location>
</feature>
<feature type="site" description="Interaction with U4 snRNA" evidence="1">
    <location>
        <position position="579"/>
    </location>
</feature>
<feature type="site" description="Interaction with U4 snRNA and with the 7-methylguanosine cap of RNA molecules" evidence="1">
    <location>
        <position position="583"/>
    </location>
</feature>
<feature type="site" description="Interaction with U4 snRNA" evidence="1">
    <location>
        <position position="732"/>
    </location>
</feature>
<feature type="site" description="Interaction with U4 snRNA and with the 7-methylguanosine cap of RNA molecules" evidence="1">
    <location>
        <position position="910"/>
    </location>
</feature>
<name>GEMI5_DICDI</name>
<protein>
    <recommendedName>
        <fullName>Component of gems protein 5</fullName>
    </recommendedName>
    <alternativeName>
        <fullName>Gemin-5</fullName>
    </alternativeName>
</protein>
<gene>
    <name type="primary">gemin5</name>
    <name type="ORF">DDB_G0288425</name>
</gene>
<dbReference type="EMBL" id="AAFI02000111">
    <property type="protein sequence ID" value="EAL63238.1"/>
    <property type="molecule type" value="Genomic_DNA"/>
</dbReference>
<dbReference type="RefSeq" id="XP_636745.1">
    <property type="nucleotide sequence ID" value="XM_631653.1"/>
</dbReference>
<dbReference type="FunCoup" id="Q54IY5">
    <property type="interactions" value="226"/>
</dbReference>
<dbReference type="STRING" id="44689.Q54IY5"/>
<dbReference type="GlyGen" id="Q54IY5">
    <property type="glycosylation" value="2 sites"/>
</dbReference>
<dbReference type="PaxDb" id="44689-DDB0302538"/>
<dbReference type="EnsemblProtists" id="EAL63238">
    <property type="protein sequence ID" value="EAL63238"/>
    <property type="gene ID" value="DDB_G0288425"/>
</dbReference>
<dbReference type="GeneID" id="8626623"/>
<dbReference type="KEGG" id="ddi:DDB_G0288425"/>
<dbReference type="dictyBase" id="DDB_G0288425">
    <property type="gene designation" value="gemin5"/>
</dbReference>
<dbReference type="VEuPathDB" id="AmoebaDB:DDB_G0288425"/>
<dbReference type="eggNOG" id="ENOG502QPYZ">
    <property type="taxonomic scope" value="Eukaryota"/>
</dbReference>
<dbReference type="HOGENOM" id="CLU_004491_0_1_1"/>
<dbReference type="InParanoid" id="Q54IY5"/>
<dbReference type="OMA" id="YWFNRND"/>
<dbReference type="PhylomeDB" id="Q54IY5"/>
<dbReference type="PRO" id="PR:Q54IY5"/>
<dbReference type="Proteomes" id="UP000002195">
    <property type="component" value="Chromosome 5"/>
</dbReference>
<dbReference type="GO" id="GO:0097504">
    <property type="term" value="C:Gemini of Cajal bodies"/>
    <property type="evidence" value="ECO:0007669"/>
    <property type="project" value="UniProtKB-SubCell"/>
</dbReference>
<dbReference type="GO" id="GO:0005634">
    <property type="term" value="C:nucleus"/>
    <property type="evidence" value="ECO:0000318"/>
    <property type="project" value="GO_Central"/>
</dbReference>
<dbReference type="GO" id="GO:0032797">
    <property type="term" value="C:SMN complex"/>
    <property type="evidence" value="ECO:0000318"/>
    <property type="project" value="GO_Central"/>
</dbReference>
<dbReference type="GO" id="GO:0003730">
    <property type="term" value="F:mRNA 3'-UTR binding"/>
    <property type="evidence" value="ECO:0000318"/>
    <property type="project" value="GO_Central"/>
</dbReference>
<dbReference type="GO" id="GO:0000387">
    <property type="term" value="P:spliceosomal snRNP assembly"/>
    <property type="evidence" value="ECO:0000318"/>
    <property type="project" value="GO_Central"/>
</dbReference>
<dbReference type="Gene3D" id="2.130.10.10">
    <property type="entry name" value="YVTN repeat-like/Quinoprotein amine dehydrogenase"/>
    <property type="match status" value="3"/>
</dbReference>
<dbReference type="InterPro" id="IPR056432">
    <property type="entry name" value="Beta-prop_GEMI5_1st"/>
</dbReference>
<dbReference type="InterPro" id="IPR052640">
    <property type="entry name" value="Gemin-5"/>
</dbReference>
<dbReference type="InterPro" id="IPR056421">
    <property type="entry name" value="TPR_GEMI5"/>
</dbReference>
<dbReference type="InterPro" id="IPR015943">
    <property type="entry name" value="WD40/YVTN_repeat-like_dom_sf"/>
</dbReference>
<dbReference type="InterPro" id="IPR019775">
    <property type="entry name" value="WD40_repeat_CS"/>
</dbReference>
<dbReference type="InterPro" id="IPR036322">
    <property type="entry name" value="WD40_repeat_dom_sf"/>
</dbReference>
<dbReference type="InterPro" id="IPR001680">
    <property type="entry name" value="WD40_rpt"/>
</dbReference>
<dbReference type="PANTHER" id="PTHR46362">
    <property type="entry name" value="GEM-ASSOCIATED PROTEIN 5"/>
    <property type="match status" value="1"/>
</dbReference>
<dbReference type="PANTHER" id="PTHR46362:SF1">
    <property type="entry name" value="GEM-ASSOCIATED PROTEIN 5"/>
    <property type="match status" value="1"/>
</dbReference>
<dbReference type="Pfam" id="PF23770">
    <property type="entry name" value="Beta-prop_RIG_1st"/>
    <property type="match status" value="1"/>
</dbReference>
<dbReference type="Pfam" id="PF23774">
    <property type="entry name" value="TPR_GEMI5"/>
    <property type="match status" value="1"/>
</dbReference>
<dbReference type="Pfam" id="PF00400">
    <property type="entry name" value="WD40"/>
    <property type="match status" value="4"/>
</dbReference>
<dbReference type="SMART" id="SM00320">
    <property type="entry name" value="WD40"/>
    <property type="match status" value="13"/>
</dbReference>
<dbReference type="SUPFAM" id="SSF50978">
    <property type="entry name" value="WD40 repeat-like"/>
    <property type="match status" value="3"/>
</dbReference>
<dbReference type="PROSITE" id="PS00678">
    <property type="entry name" value="WD_REPEATS_1"/>
    <property type="match status" value="2"/>
</dbReference>
<dbReference type="PROSITE" id="PS50082">
    <property type="entry name" value="WD_REPEATS_2"/>
    <property type="match status" value="3"/>
</dbReference>
<dbReference type="PROSITE" id="PS50294">
    <property type="entry name" value="WD_REPEATS_REGION"/>
    <property type="match status" value="3"/>
</dbReference>
<organism>
    <name type="scientific">Dictyostelium discoideum</name>
    <name type="common">Social amoeba</name>
    <dbReference type="NCBI Taxonomy" id="44689"/>
    <lineage>
        <taxon>Eukaryota</taxon>
        <taxon>Amoebozoa</taxon>
        <taxon>Evosea</taxon>
        <taxon>Eumycetozoa</taxon>
        <taxon>Dictyostelia</taxon>
        <taxon>Dictyosteliales</taxon>
        <taxon>Dictyosteliaceae</taxon>
        <taxon>Dictyostelium</taxon>
    </lineage>
</organism>